<proteinExistence type="inferred from homology"/>
<name>PYRB_BUCAP</name>
<dbReference type="EC" id="2.1.3.2" evidence="1"/>
<dbReference type="EMBL" id="AE013218">
    <property type="protein sequence ID" value="AAM67910.1"/>
    <property type="molecule type" value="Genomic_DNA"/>
</dbReference>
<dbReference type="RefSeq" id="WP_011053877.1">
    <property type="nucleotide sequence ID" value="NC_004061.1"/>
</dbReference>
<dbReference type="SMR" id="Q8K9H9"/>
<dbReference type="STRING" id="198804.BUsg_357"/>
<dbReference type="GeneID" id="93003827"/>
<dbReference type="KEGG" id="bas:BUsg_357"/>
<dbReference type="eggNOG" id="COG0540">
    <property type="taxonomic scope" value="Bacteria"/>
</dbReference>
<dbReference type="HOGENOM" id="CLU_043846_1_2_6"/>
<dbReference type="UniPathway" id="UPA00070">
    <property type="reaction ID" value="UER00116"/>
</dbReference>
<dbReference type="Proteomes" id="UP000000416">
    <property type="component" value="Chromosome"/>
</dbReference>
<dbReference type="GO" id="GO:0005829">
    <property type="term" value="C:cytosol"/>
    <property type="evidence" value="ECO:0007669"/>
    <property type="project" value="TreeGrafter"/>
</dbReference>
<dbReference type="GO" id="GO:0016597">
    <property type="term" value="F:amino acid binding"/>
    <property type="evidence" value="ECO:0007669"/>
    <property type="project" value="InterPro"/>
</dbReference>
<dbReference type="GO" id="GO:0004070">
    <property type="term" value="F:aspartate carbamoyltransferase activity"/>
    <property type="evidence" value="ECO:0007669"/>
    <property type="project" value="UniProtKB-UniRule"/>
</dbReference>
<dbReference type="GO" id="GO:0006207">
    <property type="term" value="P:'de novo' pyrimidine nucleobase biosynthetic process"/>
    <property type="evidence" value="ECO:0007669"/>
    <property type="project" value="InterPro"/>
</dbReference>
<dbReference type="GO" id="GO:0044205">
    <property type="term" value="P:'de novo' UMP biosynthetic process"/>
    <property type="evidence" value="ECO:0007669"/>
    <property type="project" value="UniProtKB-UniRule"/>
</dbReference>
<dbReference type="GO" id="GO:0006520">
    <property type="term" value="P:amino acid metabolic process"/>
    <property type="evidence" value="ECO:0007669"/>
    <property type="project" value="InterPro"/>
</dbReference>
<dbReference type="FunFam" id="3.40.50.1370:FF:000001">
    <property type="entry name" value="Aspartate carbamoyltransferase"/>
    <property type="match status" value="1"/>
</dbReference>
<dbReference type="FunFam" id="3.40.50.1370:FF:000002">
    <property type="entry name" value="Aspartate carbamoyltransferase 2"/>
    <property type="match status" value="1"/>
</dbReference>
<dbReference type="Gene3D" id="3.40.50.1370">
    <property type="entry name" value="Aspartate/ornithine carbamoyltransferase"/>
    <property type="match status" value="2"/>
</dbReference>
<dbReference type="HAMAP" id="MF_00001">
    <property type="entry name" value="Asp_carb_tr"/>
    <property type="match status" value="1"/>
</dbReference>
<dbReference type="InterPro" id="IPR006132">
    <property type="entry name" value="Asp/Orn_carbamoyltranf_P-bd"/>
</dbReference>
<dbReference type="InterPro" id="IPR006130">
    <property type="entry name" value="Asp/Orn_carbamoylTrfase"/>
</dbReference>
<dbReference type="InterPro" id="IPR036901">
    <property type="entry name" value="Asp/Orn_carbamoylTrfase_sf"/>
</dbReference>
<dbReference type="InterPro" id="IPR002082">
    <property type="entry name" value="Asp_carbamoyltransf"/>
</dbReference>
<dbReference type="InterPro" id="IPR006131">
    <property type="entry name" value="Asp_carbamoyltransf_Asp/Orn-bd"/>
</dbReference>
<dbReference type="NCBIfam" id="TIGR00670">
    <property type="entry name" value="asp_carb_tr"/>
    <property type="match status" value="1"/>
</dbReference>
<dbReference type="NCBIfam" id="NF002032">
    <property type="entry name" value="PRK00856.1"/>
    <property type="match status" value="1"/>
</dbReference>
<dbReference type="PANTHER" id="PTHR45753:SF6">
    <property type="entry name" value="ASPARTATE CARBAMOYLTRANSFERASE"/>
    <property type="match status" value="1"/>
</dbReference>
<dbReference type="PANTHER" id="PTHR45753">
    <property type="entry name" value="ORNITHINE CARBAMOYLTRANSFERASE, MITOCHONDRIAL"/>
    <property type="match status" value="1"/>
</dbReference>
<dbReference type="Pfam" id="PF00185">
    <property type="entry name" value="OTCace"/>
    <property type="match status" value="1"/>
</dbReference>
<dbReference type="Pfam" id="PF02729">
    <property type="entry name" value="OTCace_N"/>
    <property type="match status" value="1"/>
</dbReference>
<dbReference type="PRINTS" id="PR00100">
    <property type="entry name" value="AOTCASE"/>
</dbReference>
<dbReference type="PRINTS" id="PR00101">
    <property type="entry name" value="ATCASE"/>
</dbReference>
<dbReference type="SUPFAM" id="SSF53671">
    <property type="entry name" value="Aspartate/ornithine carbamoyltransferase"/>
    <property type="match status" value="1"/>
</dbReference>
<dbReference type="PROSITE" id="PS00097">
    <property type="entry name" value="CARBAMOYLTRANSFERASE"/>
    <property type="match status" value="1"/>
</dbReference>
<protein>
    <recommendedName>
        <fullName evidence="1">Aspartate carbamoyltransferase catalytic subunit</fullName>
        <ecNumber evidence="1">2.1.3.2</ecNumber>
    </recommendedName>
    <alternativeName>
        <fullName evidence="1">Aspartate transcarbamylase</fullName>
        <shortName evidence="1">ATCase</shortName>
    </alternativeName>
</protein>
<keyword id="KW-0665">Pyrimidine biosynthesis</keyword>
<keyword id="KW-0808">Transferase</keyword>
<evidence type="ECO:0000255" key="1">
    <source>
        <dbReference type="HAMAP-Rule" id="MF_00001"/>
    </source>
</evidence>
<comment type="function">
    <text evidence="1">Catalyzes the condensation of carbamoyl phosphate and aspartate to form carbamoyl aspartate and inorganic phosphate, the committed step in the de novo pyrimidine nucleotide biosynthesis pathway.</text>
</comment>
<comment type="catalytic activity">
    <reaction evidence="1">
        <text>carbamoyl phosphate + L-aspartate = N-carbamoyl-L-aspartate + phosphate + H(+)</text>
        <dbReference type="Rhea" id="RHEA:20013"/>
        <dbReference type="ChEBI" id="CHEBI:15378"/>
        <dbReference type="ChEBI" id="CHEBI:29991"/>
        <dbReference type="ChEBI" id="CHEBI:32814"/>
        <dbReference type="ChEBI" id="CHEBI:43474"/>
        <dbReference type="ChEBI" id="CHEBI:58228"/>
        <dbReference type="EC" id="2.1.3.2"/>
    </reaction>
</comment>
<comment type="pathway">
    <text evidence="1">Pyrimidine metabolism; UMP biosynthesis via de novo pathway; (S)-dihydroorotate from bicarbonate: step 2/3.</text>
</comment>
<comment type="subunit">
    <text evidence="1">Heterododecamer (2C3:3R2) of six catalytic PyrB chains organized as two trimers (C3), and six regulatory PyrI chains organized as three dimers (R2).</text>
</comment>
<comment type="similarity">
    <text evidence="1">Belongs to the aspartate/ornithine carbamoyltransferase superfamily. ATCase family.</text>
</comment>
<gene>
    <name evidence="1" type="primary">pyrB</name>
    <name type="ordered locus">BUsg_357</name>
</gene>
<accession>Q8K9H9</accession>
<feature type="chain" id="PRO_0000113111" description="Aspartate carbamoyltransferase catalytic subunit">
    <location>
        <begin position="1"/>
        <end position="311"/>
    </location>
</feature>
<feature type="binding site" evidence="1">
    <location>
        <position position="55"/>
    </location>
    <ligand>
        <name>carbamoyl phosphate</name>
        <dbReference type="ChEBI" id="CHEBI:58228"/>
    </ligand>
</feature>
<feature type="binding site" evidence="1">
    <location>
        <position position="56"/>
    </location>
    <ligand>
        <name>carbamoyl phosphate</name>
        <dbReference type="ChEBI" id="CHEBI:58228"/>
    </ligand>
</feature>
<feature type="binding site" evidence="1">
    <location>
        <position position="85"/>
    </location>
    <ligand>
        <name>L-aspartate</name>
        <dbReference type="ChEBI" id="CHEBI:29991"/>
    </ligand>
</feature>
<feature type="binding site" evidence="1">
    <location>
        <position position="106"/>
    </location>
    <ligand>
        <name>carbamoyl phosphate</name>
        <dbReference type="ChEBI" id="CHEBI:58228"/>
    </ligand>
</feature>
<feature type="binding site" evidence="1">
    <location>
        <position position="135"/>
    </location>
    <ligand>
        <name>carbamoyl phosphate</name>
        <dbReference type="ChEBI" id="CHEBI:58228"/>
    </ligand>
</feature>
<feature type="binding site" evidence="1">
    <location>
        <position position="138"/>
    </location>
    <ligand>
        <name>carbamoyl phosphate</name>
        <dbReference type="ChEBI" id="CHEBI:58228"/>
    </ligand>
</feature>
<feature type="binding site" evidence="1">
    <location>
        <position position="168"/>
    </location>
    <ligand>
        <name>L-aspartate</name>
        <dbReference type="ChEBI" id="CHEBI:29991"/>
    </ligand>
</feature>
<feature type="binding site" evidence="1">
    <location>
        <position position="230"/>
    </location>
    <ligand>
        <name>L-aspartate</name>
        <dbReference type="ChEBI" id="CHEBI:29991"/>
    </ligand>
</feature>
<feature type="binding site" evidence="1">
    <location>
        <position position="268"/>
    </location>
    <ligand>
        <name>carbamoyl phosphate</name>
        <dbReference type="ChEBI" id="CHEBI:58228"/>
    </ligand>
</feature>
<feature type="binding site" evidence="1">
    <location>
        <position position="269"/>
    </location>
    <ligand>
        <name>carbamoyl phosphate</name>
        <dbReference type="ChEBI" id="CHEBI:58228"/>
    </ligand>
</feature>
<sequence length="311" mass="35315">MRNSLYKKNIISISDLNQNELELVLKKSAFLKVKAQPNLLKNKIIASCFFEASTRTRLSFETAVHRLGASIIGFSDGSNISLGKKGETLSDTISVISSYVDAIIIRHPQEGSARLAAQFSNGVPIFNAGDGANQHPTQTLLDLFTIKETQNKLNNLNIAMVGDLKYGRTVHSLTQALAKYKNNQFFFVSPDSLTMPNYINDMLYKKEIHWKRYKNIEEIISEIDILYMTRVQKERLDSTEYASAKSKFVLQTSTLKNARNNLKILHPLPRIDEIDNNVDFTPYAWYFKQAANGIYARQAILSLVLIEKHFE</sequence>
<reference key="1">
    <citation type="journal article" date="2002" name="Science">
        <title>50 million years of genomic stasis in endosymbiotic bacteria.</title>
        <authorList>
            <person name="Tamas I."/>
            <person name="Klasson L."/>
            <person name="Canbaeck B."/>
            <person name="Naeslund A.K."/>
            <person name="Eriksson A.-S."/>
            <person name="Wernegreen J.J."/>
            <person name="Sandstroem J.P."/>
            <person name="Moran N.A."/>
            <person name="Andersson S.G.E."/>
        </authorList>
    </citation>
    <scope>NUCLEOTIDE SEQUENCE [LARGE SCALE GENOMIC DNA]</scope>
    <source>
        <strain>Sg</strain>
    </source>
</reference>
<organism>
    <name type="scientific">Buchnera aphidicola subsp. Schizaphis graminum (strain Sg)</name>
    <dbReference type="NCBI Taxonomy" id="198804"/>
    <lineage>
        <taxon>Bacteria</taxon>
        <taxon>Pseudomonadati</taxon>
        <taxon>Pseudomonadota</taxon>
        <taxon>Gammaproteobacteria</taxon>
        <taxon>Enterobacterales</taxon>
        <taxon>Erwiniaceae</taxon>
        <taxon>Buchnera</taxon>
    </lineage>
</organism>